<protein>
    <recommendedName>
        <fullName evidence="1">3-isopropylmalate dehydrogenase</fullName>
        <ecNumber evidence="1">1.1.1.85</ecNumber>
    </recommendedName>
    <alternativeName>
        <fullName evidence="1">3-IPM-DH</fullName>
    </alternativeName>
    <alternativeName>
        <fullName evidence="1">Beta-IPM dehydrogenase</fullName>
        <shortName evidence="1">IMDH</shortName>
    </alternativeName>
</protein>
<feature type="chain" id="PRO_0000083731" description="3-isopropylmalate dehydrogenase">
    <location>
        <begin position="1"/>
        <end position="360"/>
    </location>
</feature>
<feature type="binding site" evidence="1">
    <location>
        <begin position="76"/>
        <end position="89"/>
    </location>
    <ligand>
        <name>NAD(+)</name>
        <dbReference type="ChEBI" id="CHEBI:57540"/>
    </ligand>
</feature>
<feature type="binding site" evidence="1">
    <location>
        <position position="96"/>
    </location>
    <ligand>
        <name>substrate</name>
    </ligand>
</feature>
<feature type="binding site" evidence="1">
    <location>
        <position position="106"/>
    </location>
    <ligand>
        <name>substrate</name>
    </ligand>
</feature>
<feature type="binding site" evidence="1">
    <location>
        <position position="134"/>
    </location>
    <ligand>
        <name>substrate</name>
    </ligand>
</feature>
<feature type="binding site" evidence="1">
    <location>
        <position position="224"/>
    </location>
    <ligand>
        <name>Mg(2+)</name>
        <dbReference type="ChEBI" id="CHEBI:18420"/>
    </ligand>
</feature>
<feature type="binding site" evidence="1">
    <location>
        <position position="224"/>
    </location>
    <ligand>
        <name>substrate</name>
    </ligand>
</feature>
<feature type="binding site" evidence="1">
    <location>
        <position position="248"/>
    </location>
    <ligand>
        <name>Mg(2+)</name>
        <dbReference type="ChEBI" id="CHEBI:18420"/>
    </ligand>
</feature>
<feature type="binding site" evidence="1">
    <location>
        <position position="252"/>
    </location>
    <ligand>
        <name>Mg(2+)</name>
        <dbReference type="ChEBI" id="CHEBI:18420"/>
    </ligand>
</feature>
<feature type="binding site" evidence="1">
    <location>
        <begin position="282"/>
        <end position="294"/>
    </location>
    <ligand>
        <name>NAD(+)</name>
        <dbReference type="ChEBI" id="CHEBI:57540"/>
    </ligand>
</feature>
<feature type="site" description="Important for catalysis" evidence="1">
    <location>
        <position position="141"/>
    </location>
</feature>
<feature type="site" description="Important for catalysis" evidence="1">
    <location>
        <position position="192"/>
    </location>
</feature>
<keyword id="KW-0028">Amino-acid biosynthesis</keyword>
<keyword id="KW-0100">Branched-chain amino acid biosynthesis</keyword>
<keyword id="KW-0963">Cytoplasm</keyword>
<keyword id="KW-0432">Leucine biosynthesis</keyword>
<keyword id="KW-0460">Magnesium</keyword>
<keyword id="KW-0464">Manganese</keyword>
<keyword id="KW-0479">Metal-binding</keyword>
<keyword id="KW-0520">NAD</keyword>
<keyword id="KW-0560">Oxidoreductase</keyword>
<sequence length="360" mass="38877">MSKQILILPGDGIGPEIMTEAVKVLELANEKYQLGFELTHDVIGGAAIDKHGVPLADETLERARAADAVLLGAVGGPKWDTIERDIRPERGLLKIRSQLGLFGNLRPAILYPQLADASSLKPEIVAGLDIMIVRELTGGIYFGAPRGTRVLDNGERQAYDTLPYSESEIRRIAKVGFDMAMVRGKKLCSVDKANVLASSQLWREIVEQVARDYPEVELSHMYVDNAAMQLVRAPKQFDVIVTDNLFGDILSDQASMLTGSIGMLPSASLDTANKGMYEPCHGSAPDIAGKGIANPLATILSVSMMLRYSFNLTDAADAIEKAVSLVLDQGIRTGDIWSEGKVKVGTQEMGDAVVAALRNL</sequence>
<organism>
    <name type="scientific">Pseudomonas syringae pv. syringae (strain B728a)</name>
    <dbReference type="NCBI Taxonomy" id="205918"/>
    <lineage>
        <taxon>Bacteria</taxon>
        <taxon>Pseudomonadati</taxon>
        <taxon>Pseudomonadota</taxon>
        <taxon>Gammaproteobacteria</taxon>
        <taxon>Pseudomonadales</taxon>
        <taxon>Pseudomonadaceae</taxon>
        <taxon>Pseudomonas</taxon>
        <taxon>Pseudomonas syringae</taxon>
    </lineage>
</organism>
<dbReference type="EC" id="1.1.1.85" evidence="1"/>
<dbReference type="EMBL" id="CP000075">
    <property type="protein sequence ID" value="AAY37028.1"/>
    <property type="molecule type" value="Genomic_DNA"/>
</dbReference>
<dbReference type="RefSeq" id="WP_011267364.1">
    <property type="nucleotide sequence ID" value="NC_007005.1"/>
</dbReference>
<dbReference type="RefSeq" id="YP_235066.1">
    <property type="nucleotide sequence ID" value="NC_007005.1"/>
</dbReference>
<dbReference type="SMR" id="Q4ZUZ4"/>
<dbReference type="STRING" id="205918.Psyr_1985"/>
<dbReference type="KEGG" id="psb:Psyr_1985"/>
<dbReference type="PATRIC" id="fig|205918.7.peg.2028"/>
<dbReference type="eggNOG" id="COG0473">
    <property type="taxonomic scope" value="Bacteria"/>
</dbReference>
<dbReference type="HOGENOM" id="CLU_031953_0_3_6"/>
<dbReference type="OrthoDB" id="9767905at2"/>
<dbReference type="UniPathway" id="UPA00048">
    <property type="reaction ID" value="UER00072"/>
</dbReference>
<dbReference type="Proteomes" id="UP000000426">
    <property type="component" value="Chromosome"/>
</dbReference>
<dbReference type="GO" id="GO:0005829">
    <property type="term" value="C:cytosol"/>
    <property type="evidence" value="ECO:0007669"/>
    <property type="project" value="TreeGrafter"/>
</dbReference>
<dbReference type="GO" id="GO:0003862">
    <property type="term" value="F:3-isopropylmalate dehydrogenase activity"/>
    <property type="evidence" value="ECO:0007669"/>
    <property type="project" value="UniProtKB-UniRule"/>
</dbReference>
<dbReference type="GO" id="GO:0000287">
    <property type="term" value="F:magnesium ion binding"/>
    <property type="evidence" value="ECO:0007669"/>
    <property type="project" value="InterPro"/>
</dbReference>
<dbReference type="GO" id="GO:0051287">
    <property type="term" value="F:NAD binding"/>
    <property type="evidence" value="ECO:0007669"/>
    <property type="project" value="InterPro"/>
</dbReference>
<dbReference type="GO" id="GO:0009098">
    <property type="term" value="P:L-leucine biosynthetic process"/>
    <property type="evidence" value="ECO:0007669"/>
    <property type="project" value="UniProtKB-UniRule"/>
</dbReference>
<dbReference type="FunFam" id="3.40.718.10:FF:000004">
    <property type="entry name" value="3-isopropylmalate dehydrogenase"/>
    <property type="match status" value="1"/>
</dbReference>
<dbReference type="Gene3D" id="3.40.718.10">
    <property type="entry name" value="Isopropylmalate Dehydrogenase"/>
    <property type="match status" value="1"/>
</dbReference>
<dbReference type="HAMAP" id="MF_01033">
    <property type="entry name" value="LeuB_type1"/>
    <property type="match status" value="1"/>
</dbReference>
<dbReference type="InterPro" id="IPR019818">
    <property type="entry name" value="IsoCit/isopropylmalate_DH_CS"/>
</dbReference>
<dbReference type="InterPro" id="IPR024084">
    <property type="entry name" value="IsoPropMal-DH-like_dom"/>
</dbReference>
<dbReference type="InterPro" id="IPR004429">
    <property type="entry name" value="Isopropylmalate_DH"/>
</dbReference>
<dbReference type="NCBIfam" id="TIGR00169">
    <property type="entry name" value="leuB"/>
    <property type="match status" value="1"/>
</dbReference>
<dbReference type="PANTHER" id="PTHR42979">
    <property type="entry name" value="3-ISOPROPYLMALATE DEHYDROGENASE"/>
    <property type="match status" value="1"/>
</dbReference>
<dbReference type="PANTHER" id="PTHR42979:SF1">
    <property type="entry name" value="3-ISOPROPYLMALATE DEHYDROGENASE"/>
    <property type="match status" value="1"/>
</dbReference>
<dbReference type="Pfam" id="PF00180">
    <property type="entry name" value="Iso_dh"/>
    <property type="match status" value="1"/>
</dbReference>
<dbReference type="SMART" id="SM01329">
    <property type="entry name" value="Iso_dh"/>
    <property type="match status" value="1"/>
</dbReference>
<dbReference type="SUPFAM" id="SSF53659">
    <property type="entry name" value="Isocitrate/Isopropylmalate dehydrogenase-like"/>
    <property type="match status" value="1"/>
</dbReference>
<dbReference type="PROSITE" id="PS00470">
    <property type="entry name" value="IDH_IMDH"/>
    <property type="match status" value="1"/>
</dbReference>
<accession>Q4ZUZ4</accession>
<gene>
    <name evidence="1" type="primary">leuB</name>
    <name type="ordered locus">Psyr_1985</name>
</gene>
<comment type="function">
    <text evidence="1">Catalyzes the oxidation of 3-carboxy-2-hydroxy-4-methylpentanoate (3-isopropylmalate) to 3-carboxy-4-methyl-2-oxopentanoate. The product decarboxylates to 4-methyl-2 oxopentanoate.</text>
</comment>
<comment type="catalytic activity">
    <reaction evidence="1">
        <text>(2R,3S)-3-isopropylmalate + NAD(+) = 4-methyl-2-oxopentanoate + CO2 + NADH</text>
        <dbReference type="Rhea" id="RHEA:32271"/>
        <dbReference type="ChEBI" id="CHEBI:16526"/>
        <dbReference type="ChEBI" id="CHEBI:17865"/>
        <dbReference type="ChEBI" id="CHEBI:35121"/>
        <dbReference type="ChEBI" id="CHEBI:57540"/>
        <dbReference type="ChEBI" id="CHEBI:57945"/>
        <dbReference type="EC" id="1.1.1.85"/>
    </reaction>
</comment>
<comment type="cofactor">
    <cofactor evidence="1">
        <name>Mg(2+)</name>
        <dbReference type="ChEBI" id="CHEBI:18420"/>
    </cofactor>
    <cofactor evidence="1">
        <name>Mn(2+)</name>
        <dbReference type="ChEBI" id="CHEBI:29035"/>
    </cofactor>
    <text evidence="1">Binds 1 Mg(2+) or Mn(2+) ion per subunit.</text>
</comment>
<comment type="pathway">
    <text evidence="1">Amino-acid biosynthesis; L-leucine biosynthesis; L-leucine from 3-methyl-2-oxobutanoate: step 3/4.</text>
</comment>
<comment type="subunit">
    <text evidence="1">Homodimer.</text>
</comment>
<comment type="subcellular location">
    <subcellularLocation>
        <location evidence="1">Cytoplasm</location>
    </subcellularLocation>
</comment>
<comment type="similarity">
    <text evidence="1">Belongs to the isocitrate and isopropylmalate dehydrogenases family. LeuB type 1 subfamily.</text>
</comment>
<reference key="1">
    <citation type="journal article" date="2005" name="Proc. Natl. Acad. Sci. U.S.A.">
        <title>Comparison of the complete genome sequences of Pseudomonas syringae pv. syringae B728a and pv. tomato DC3000.</title>
        <authorList>
            <person name="Feil H."/>
            <person name="Feil W.S."/>
            <person name="Chain P."/>
            <person name="Larimer F."/>
            <person name="Dibartolo G."/>
            <person name="Copeland A."/>
            <person name="Lykidis A."/>
            <person name="Trong S."/>
            <person name="Nolan M."/>
            <person name="Goltsman E."/>
            <person name="Thiel J."/>
            <person name="Malfatti S."/>
            <person name="Loper J.E."/>
            <person name="Lapidus A."/>
            <person name="Detter J.C."/>
            <person name="Land M."/>
            <person name="Richardson P.M."/>
            <person name="Kyrpides N.C."/>
            <person name="Ivanova N."/>
            <person name="Lindow S.E."/>
        </authorList>
    </citation>
    <scope>NUCLEOTIDE SEQUENCE [LARGE SCALE GENOMIC DNA]</scope>
    <source>
        <strain>B728a</strain>
    </source>
</reference>
<proteinExistence type="inferred from homology"/>
<name>LEU3_PSEU2</name>
<evidence type="ECO:0000255" key="1">
    <source>
        <dbReference type="HAMAP-Rule" id="MF_01033"/>
    </source>
</evidence>